<protein>
    <recommendedName>
        <fullName evidence="1">Type III pantothenate kinase</fullName>
        <ecNumber evidence="1">2.7.1.33</ecNumber>
    </recommendedName>
    <alternativeName>
        <fullName evidence="1">PanK-III</fullName>
    </alternativeName>
    <alternativeName>
        <fullName evidence="1">Pantothenic acid kinase</fullName>
    </alternativeName>
</protein>
<dbReference type="EC" id="2.7.1.33" evidence="1"/>
<dbReference type="EMBL" id="CP000240">
    <property type="protein sequence ID" value="ABD02476.1"/>
    <property type="molecule type" value="Genomic_DNA"/>
</dbReference>
<dbReference type="RefSeq" id="WP_011433124.1">
    <property type="nucleotide sequence ID" value="NC_007776.1"/>
</dbReference>
<dbReference type="SMR" id="Q2JLD5"/>
<dbReference type="STRING" id="321332.CYB_1510"/>
<dbReference type="KEGG" id="cyb:CYB_1510"/>
<dbReference type="eggNOG" id="COG1521">
    <property type="taxonomic scope" value="Bacteria"/>
</dbReference>
<dbReference type="HOGENOM" id="CLU_066627_2_1_3"/>
<dbReference type="OrthoDB" id="482945at2"/>
<dbReference type="UniPathway" id="UPA00241">
    <property type="reaction ID" value="UER00352"/>
</dbReference>
<dbReference type="Proteomes" id="UP000001938">
    <property type="component" value="Chromosome"/>
</dbReference>
<dbReference type="GO" id="GO:0005737">
    <property type="term" value="C:cytoplasm"/>
    <property type="evidence" value="ECO:0007669"/>
    <property type="project" value="UniProtKB-SubCell"/>
</dbReference>
<dbReference type="GO" id="GO:0005524">
    <property type="term" value="F:ATP binding"/>
    <property type="evidence" value="ECO:0007669"/>
    <property type="project" value="UniProtKB-UniRule"/>
</dbReference>
<dbReference type="GO" id="GO:0046872">
    <property type="term" value="F:metal ion binding"/>
    <property type="evidence" value="ECO:0007669"/>
    <property type="project" value="UniProtKB-KW"/>
</dbReference>
<dbReference type="GO" id="GO:0004594">
    <property type="term" value="F:pantothenate kinase activity"/>
    <property type="evidence" value="ECO:0007669"/>
    <property type="project" value="UniProtKB-UniRule"/>
</dbReference>
<dbReference type="GO" id="GO:0015937">
    <property type="term" value="P:coenzyme A biosynthetic process"/>
    <property type="evidence" value="ECO:0007669"/>
    <property type="project" value="UniProtKB-UniRule"/>
</dbReference>
<dbReference type="CDD" id="cd24015">
    <property type="entry name" value="ASKHA_NBD_PanK-III"/>
    <property type="match status" value="1"/>
</dbReference>
<dbReference type="Gene3D" id="3.30.420.40">
    <property type="match status" value="1"/>
</dbReference>
<dbReference type="HAMAP" id="MF_01274">
    <property type="entry name" value="Pantothen_kinase_3"/>
    <property type="match status" value="1"/>
</dbReference>
<dbReference type="InterPro" id="IPR043129">
    <property type="entry name" value="ATPase_NBD"/>
</dbReference>
<dbReference type="InterPro" id="IPR004619">
    <property type="entry name" value="Type_III_PanK"/>
</dbReference>
<dbReference type="NCBIfam" id="TIGR00671">
    <property type="entry name" value="baf"/>
    <property type="match status" value="1"/>
</dbReference>
<dbReference type="NCBIfam" id="NF009871">
    <property type="entry name" value="PRK13331.1"/>
    <property type="match status" value="1"/>
</dbReference>
<dbReference type="PANTHER" id="PTHR34265">
    <property type="entry name" value="TYPE III PANTOTHENATE KINASE"/>
    <property type="match status" value="1"/>
</dbReference>
<dbReference type="PANTHER" id="PTHR34265:SF1">
    <property type="entry name" value="TYPE III PANTOTHENATE KINASE"/>
    <property type="match status" value="1"/>
</dbReference>
<dbReference type="Pfam" id="PF03309">
    <property type="entry name" value="Pan_kinase"/>
    <property type="match status" value="1"/>
</dbReference>
<dbReference type="SUPFAM" id="SSF53067">
    <property type="entry name" value="Actin-like ATPase domain"/>
    <property type="match status" value="1"/>
</dbReference>
<proteinExistence type="inferred from homology"/>
<gene>
    <name evidence="1" type="primary">coaX</name>
    <name type="ordered locus">CYB_1510</name>
</gene>
<name>COAX_SYNJB</name>
<comment type="function">
    <text evidence="1">Catalyzes the phosphorylation of pantothenate (Pan), the first step in CoA biosynthesis.</text>
</comment>
<comment type="catalytic activity">
    <reaction evidence="1">
        <text>(R)-pantothenate + ATP = (R)-4'-phosphopantothenate + ADP + H(+)</text>
        <dbReference type="Rhea" id="RHEA:16373"/>
        <dbReference type="ChEBI" id="CHEBI:10986"/>
        <dbReference type="ChEBI" id="CHEBI:15378"/>
        <dbReference type="ChEBI" id="CHEBI:29032"/>
        <dbReference type="ChEBI" id="CHEBI:30616"/>
        <dbReference type="ChEBI" id="CHEBI:456216"/>
        <dbReference type="EC" id="2.7.1.33"/>
    </reaction>
</comment>
<comment type="cofactor">
    <cofactor evidence="1">
        <name>NH4(+)</name>
        <dbReference type="ChEBI" id="CHEBI:28938"/>
    </cofactor>
    <cofactor evidence="1">
        <name>K(+)</name>
        <dbReference type="ChEBI" id="CHEBI:29103"/>
    </cofactor>
    <text evidence="1">A monovalent cation. Ammonium or potassium.</text>
</comment>
<comment type="pathway">
    <text evidence="1">Cofactor biosynthesis; coenzyme A biosynthesis; CoA from (R)-pantothenate: step 1/5.</text>
</comment>
<comment type="subunit">
    <text evidence="1">Homodimer.</text>
</comment>
<comment type="subcellular location">
    <subcellularLocation>
        <location evidence="1">Cytoplasm</location>
    </subcellularLocation>
</comment>
<comment type="similarity">
    <text evidence="1">Belongs to the type III pantothenate kinase family.</text>
</comment>
<sequence length="254" mass="27836">MSFEEGADLNASHCCREWLAAVLGNTHVRWGWFVEETLVKVERFPAHQPLSWPQQTELWLAPVGSAPLPPASPWVHQLELSQVPLRDPYPGLGLDRALALWAAGIHYGWPCLVIDAGTALTLTGADSEGSLVGGAILPGLGLQAQALADHTALLPKVQWDPQDPLPPRWANDTVAAIRSGILHTLLAGLREFIADWRRRFPQGPLLLTGGDGKWLHPHLGPLDPELRWDPHLVLRGIAGCRQLHRTARHSPSAE</sequence>
<keyword id="KW-0067">ATP-binding</keyword>
<keyword id="KW-0173">Coenzyme A biosynthesis</keyword>
<keyword id="KW-0963">Cytoplasm</keyword>
<keyword id="KW-0418">Kinase</keyword>
<keyword id="KW-0479">Metal-binding</keyword>
<keyword id="KW-0547">Nucleotide-binding</keyword>
<keyword id="KW-0630">Potassium</keyword>
<keyword id="KW-1185">Reference proteome</keyword>
<keyword id="KW-0808">Transferase</keyword>
<evidence type="ECO:0000255" key="1">
    <source>
        <dbReference type="HAMAP-Rule" id="MF_01274"/>
    </source>
</evidence>
<organism>
    <name type="scientific">Synechococcus sp. (strain JA-2-3B'a(2-13))</name>
    <name type="common">Cyanobacteria bacterium Yellowstone B-Prime</name>
    <dbReference type="NCBI Taxonomy" id="321332"/>
    <lineage>
        <taxon>Bacteria</taxon>
        <taxon>Bacillati</taxon>
        <taxon>Cyanobacteriota</taxon>
        <taxon>Cyanophyceae</taxon>
        <taxon>Synechococcales</taxon>
        <taxon>Synechococcaceae</taxon>
        <taxon>Synechococcus</taxon>
    </lineage>
</organism>
<reference key="1">
    <citation type="journal article" date="2007" name="ISME J.">
        <title>Population level functional diversity in a microbial community revealed by comparative genomic and metagenomic analyses.</title>
        <authorList>
            <person name="Bhaya D."/>
            <person name="Grossman A.R."/>
            <person name="Steunou A.-S."/>
            <person name="Khuri N."/>
            <person name="Cohan F.M."/>
            <person name="Hamamura N."/>
            <person name="Melendrez M.C."/>
            <person name="Bateson M.M."/>
            <person name="Ward D.M."/>
            <person name="Heidelberg J.F."/>
        </authorList>
    </citation>
    <scope>NUCLEOTIDE SEQUENCE [LARGE SCALE GENOMIC DNA]</scope>
    <source>
        <strain>JA-2-3B'a(2-13)</strain>
    </source>
</reference>
<accession>Q2JLD5</accession>
<feature type="chain" id="PRO_0000270902" description="Type III pantothenate kinase">
    <location>
        <begin position="1"/>
        <end position="254"/>
    </location>
</feature>
<feature type="active site" description="Proton acceptor" evidence="1">
    <location>
        <position position="95"/>
    </location>
</feature>
<feature type="binding site" evidence="1">
    <location>
        <begin position="22"/>
        <end position="29"/>
    </location>
    <ligand>
        <name>ATP</name>
        <dbReference type="ChEBI" id="CHEBI:30616"/>
    </ligand>
</feature>
<feature type="binding site" evidence="1">
    <location>
        <position position="89"/>
    </location>
    <ligand>
        <name>substrate</name>
    </ligand>
</feature>
<feature type="binding site" evidence="1">
    <location>
        <begin position="93"/>
        <end position="96"/>
    </location>
    <ligand>
        <name>substrate</name>
    </ligand>
</feature>
<feature type="binding site" evidence="1">
    <location>
        <position position="115"/>
    </location>
    <ligand>
        <name>K(+)</name>
        <dbReference type="ChEBI" id="CHEBI:29103"/>
    </ligand>
</feature>
<feature type="binding site" evidence="1">
    <location>
        <position position="118"/>
    </location>
    <ligand>
        <name>ATP</name>
        <dbReference type="ChEBI" id="CHEBI:30616"/>
    </ligand>
</feature>
<feature type="binding site" evidence="1">
    <location>
        <position position="173"/>
    </location>
    <ligand>
        <name>substrate</name>
    </ligand>
</feature>